<dbReference type="EC" id="6.1.1.20" evidence="1"/>
<dbReference type="EMBL" id="CR555306">
    <property type="protein sequence ID" value="CAI06581.1"/>
    <property type="molecule type" value="Genomic_DNA"/>
</dbReference>
<dbReference type="RefSeq" id="WP_011236312.1">
    <property type="nucleotide sequence ID" value="NC_006513.1"/>
</dbReference>
<dbReference type="SMR" id="Q5P7Y0"/>
<dbReference type="STRING" id="76114.ebA867"/>
<dbReference type="KEGG" id="eba:ebA867"/>
<dbReference type="eggNOG" id="COG0072">
    <property type="taxonomic scope" value="Bacteria"/>
</dbReference>
<dbReference type="eggNOG" id="COG0073">
    <property type="taxonomic scope" value="Bacteria"/>
</dbReference>
<dbReference type="HOGENOM" id="CLU_016891_0_0_4"/>
<dbReference type="OrthoDB" id="9805455at2"/>
<dbReference type="Proteomes" id="UP000006552">
    <property type="component" value="Chromosome"/>
</dbReference>
<dbReference type="GO" id="GO:0009328">
    <property type="term" value="C:phenylalanine-tRNA ligase complex"/>
    <property type="evidence" value="ECO:0007669"/>
    <property type="project" value="TreeGrafter"/>
</dbReference>
<dbReference type="GO" id="GO:0005524">
    <property type="term" value="F:ATP binding"/>
    <property type="evidence" value="ECO:0007669"/>
    <property type="project" value="UniProtKB-UniRule"/>
</dbReference>
<dbReference type="GO" id="GO:0000287">
    <property type="term" value="F:magnesium ion binding"/>
    <property type="evidence" value="ECO:0007669"/>
    <property type="project" value="UniProtKB-UniRule"/>
</dbReference>
<dbReference type="GO" id="GO:0004826">
    <property type="term" value="F:phenylalanine-tRNA ligase activity"/>
    <property type="evidence" value="ECO:0007669"/>
    <property type="project" value="UniProtKB-UniRule"/>
</dbReference>
<dbReference type="GO" id="GO:0000049">
    <property type="term" value="F:tRNA binding"/>
    <property type="evidence" value="ECO:0007669"/>
    <property type="project" value="UniProtKB-KW"/>
</dbReference>
<dbReference type="GO" id="GO:0006432">
    <property type="term" value="P:phenylalanyl-tRNA aminoacylation"/>
    <property type="evidence" value="ECO:0007669"/>
    <property type="project" value="UniProtKB-UniRule"/>
</dbReference>
<dbReference type="CDD" id="cd00769">
    <property type="entry name" value="PheRS_beta_core"/>
    <property type="match status" value="1"/>
</dbReference>
<dbReference type="CDD" id="cd02796">
    <property type="entry name" value="tRNA_bind_bactPheRS"/>
    <property type="match status" value="1"/>
</dbReference>
<dbReference type="FunFam" id="2.40.50.140:FF:000045">
    <property type="entry name" value="Phenylalanine--tRNA ligase beta subunit"/>
    <property type="match status" value="1"/>
</dbReference>
<dbReference type="FunFam" id="3.30.56.10:FF:000002">
    <property type="entry name" value="Phenylalanine--tRNA ligase beta subunit"/>
    <property type="match status" value="1"/>
</dbReference>
<dbReference type="FunFam" id="3.30.70.380:FF:000001">
    <property type="entry name" value="Phenylalanine--tRNA ligase beta subunit"/>
    <property type="match status" value="1"/>
</dbReference>
<dbReference type="FunFam" id="3.30.930.10:FF:000022">
    <property type="entry name" value="Phenylalanine--tRNA ligase beta subunit"/>
    <property type="match status" value="1"/>
</dbReference>
<dbReference type="FunFam" id="3.50.40.10:FF:000001">
    <property type="entry name" value="Phenylalanine--tRNA ligase beta subunit"/>
    <property type="match status" value="1"/>
</dbReference>
<dbReference type="Gene3D" id="3.30.56.10">
    <property type="match status" value="2"/>
</dbReference>
<dbReference type="Gene3D" id="3.30.930.10">
    <property type="entry name" value="Bira Bifunctional Protein, Domain 2"/>
    <property type="match status" value="1"/>
</dbReference>
<dbReference type="Gene3D" id="3.30.70.380">
    <property type="entry name" value="Ferrodoxin-fold anticodon-binding domain"/>
    <property type="match status" value="1"/>
</dbReference>
<dbReference type="Gene3D" id="2.40.50.140">
    <property type="entry name" value="Nucleic acid-binding proteins"/>
    <property type="match status" value="1"/>
</dbReference>
<dbReference type="Gene3D" id="3.50.40.10">
    <property type="entry name" value="Phenylalanyl-trna Synthetase, Chain B, domain 3"/>
    <property type="match status" value="1"/>
</dbReference>
<dbReference type="HAMAP" id="MF_00283">
    <property type="entry name" value="Phe_tRNA_synth_beta1"/>
    <property type="match status" value="1"/>
</dbReference>
<dbReference type="InterPro" id="IPR045864">
    <property type="entry name" value="aa-tRNA-synth_II/BPL/LPL"/>
</dbReference>
<dbReference type="InterPro" id="IPR005146">
    <property type="entry name" value="B3/B4_tRNA-bd"/>
</dbReference>
<dbReference type="InterPro" id="IPR009061">
    <property type="entry name" value="DNA-bd_dom_put_sf"/>
</dbReference>
<dbReference type="InterPro" id="IPR005121">
    <property type="entry name" value="Fdx_antiC-bd"/>
</dbReference>
<dbReference type="InterPro" id="IPR036690">
    <property type="entry name" value="Fdx_antiC-bd_sf"/>
</dbReference>
<dbReference type="InterPro" id="IPR012340">
    <property type="entry name" value="NA-bd_OB-fold"/>
</dbReference>
<dbReference type="InterPro" id="IPR045060">
    <property type="entry name" value="Phe-tRNA-ligase_IIc_bsu"/>
</dbReference>
<dbReference type="InterPro" id="IPR004532">
    <property type="entry name" value="Phe-tRNA-ligase_IIc_bsu_bact"/>
</dbReference>
<dbReference type="InterPro" id="IPR020825">
    <property type="entry name" value="Phe-tRNA_synthase-like_B3/B4"/>
</dbReference>
<dbReference type="InterPro" id="IPR041616">
    <property type="entry name" value="PheRS_beta_core"/>
</dbReference>
<dbReference type="InterPro" id="IPR002547">
    <property type="entry name" value="tRNA-bd_dom"/>
</dbReference>
<dbReference type="InterPro" id="IPR033714">
    <property type="entry name" value="tRNA_bind_bactPheRS"/>
</dbReference>
<dbReference type="InterPro" id="IPR005147">
    <property type="entry name" value="tRNA_synthase_B5-dom"/>
</dbReference>
<dbReference type="NCBIfam" id="TIGR00472">
    <property type="entry name" value="pheT_bact"/>
    <property type="match status" value="1"/>
</dbReference>
<dbReference type="NCBIfam" id="NF045760">
    <property type="entry name" value="YtpR"/>
    <property type="match status" value="1"/>
</dbReference>
<dbReference type="PANTHER" id="PTHR10947:SF0">
    <property type="entry name" value="PHENYLALANINE--TRNA LIGASE BETA SUBUNIT"/>
    <property type="match status" value="1"/>
</dbReference>
<dbReference type="PANTHER" id="PTHR10947">
    <property type="entry name" value="PHENYLALANYL-TRNA SYNTHETASE BETA CHAIN AND LEUCINE-RICH REPEAT-CONTAINING PROTEIN 47"/>
    <property type="match status" value="1"/>
</dbReference>
<dbReference type="Pfam" id="PF03483">
    <property type="entry name" value="B3_4"/>
    <property type="match status" value="1"/>
</dbReference>
<dbReference type="Pfam" id="PF03484">
    <property type="entry name" value="B5"/>
    <property type="match status" value="1"/>
</dbReference>
<dbReference type="Pfam" id="PF03147">
    <property type="entry name" value="FDX-ACB"/>
    <property type="match status" value="1"/>
</dbReference>
<dbReference type="Pfam" id="PF01588">
    <property type="entry name" value="tRNA_bind"/>
    <property type="match status" value="1"/>
</dbReference>
<dbReference type="Pfam" id="PF17759">
    <property type="entry name" value="tRNA_synthFbeta"/>
    <property type="match status" value="1"/>
</dbReference>
<dbReference type="SMART" id="SM00873">
    <property type="entry name" value="B3_4"/>
    <property type="match status" value="1"/>
</dbReference>
<dbReference type="SMART" id="SM00874">
    <property type="entry name" value="B5"/>
    <property type="match status" value="1"/>
</dbReference>
<dbReference type="SMART" id="SM00896">
    <property type="entry name" value="FDX-ACB"/>
    <property type="match status" value="1"/>
</dbReference>
<dbReference type="SUPFAM" id="SSF54991">
    <property type="entry name" value="Anticodon-binding domain of PheRS"/>
    <property type="match status" value="1"/>
</dbReference>
<dbReference type="SUPFAM" id="SSF55681">
    <property type="entry name" value="Class II aaRS and biotin synthetases"/>
    <property type="match status" value="1"/>
</dbReference>
<dbReference type="SUPFAM" id="SSF50249">
    <property type="entry name" value="Nucleic acid-binding proteins"/>
    <property type="match status" value="1"/>
</dbReference>
<dbReference type="SUPFAM" id="SSF56037">
    <property type="entry name" value="PheT/TilS domain"/>
    <property type="match status" value="1"/>
</dbReference>
<dbReference type="SUPFAM" id="SSF46955">
    <property type="entry name" value="Putative DNA-binding domain"/>
    <property type="match status" value="1"/>
</dbReference>
<dbReference type="PROSITE" id="PS51483">
    <property type="entry name" value="B5"/>
    <property type="match status" value="1"/>
</dbReference>
<dbReference type="PROSITE" id="PS51447">
    <property type="entry name" value="FDX_ACB"/>
    <property type="match status" value="1"/>
</dbReference>
<dbReference type="PROSITE" id="PS50886">
    <property type="entry name" value="TRBD"/>
    <property type="match status" value="1"/>
</dbReference>
<reference key="1">
    <citation type="journal article" date="2005" name="Arch. Microbiol.">
        <title>The genome sequence of an anaerobic aromatic-degrading denitrifying bacterium, strain EbN1.</title>
        <authorList>
            <person name="Rabus R."/>
            <person name="Kube M."/>
            <person name="Heider J."/>
            <person name="Beck A."/>
            <person name="Heitmann K."/>
            <person name="Widdel F."/>
            <person name="Reinhardt R."/>
        </authorList>
    </citation>
    <scope>NUCLEOTIDE SEQUENCE [LARGE SCALE GENOMIC DNA]</scope>
    <source>
        <strain>DSM 19018 / LMG 30748 / EbN1</strain>
    </source>
</reference>
<name>SYFB_AROAE</name>
<proteinExistence type="inferred from homology"/>
<protein>
    <recommendedName>
        <fullName evidence="1">Phenylalanine--tRNA ligase beta subunit</fullName>
        <ecNumber evidence="1">6.1.1.20</ecNumber>
    </recommendedName>
    <alternativeName>
        <fullName evidence="1">Phenylalanyl-tRNA synthetase beta subunit</fullName>
        <shortName evidence="1">PheRS</shortName>
    </alternativeName>
</protein>
<feature type="chain" id="PRO_0000126835" description="Phenylalanine--tRNA ligase beta subunit">
    <location>
        <begin position="1"/>
        <end position="792"/>
    </location>
</feature>
<feature type="domain" description="tRNA-binding" evidence="1">
    <location>
        <begin position="39"/>
        <end position="147"/>
    </location>
</feature>
<feature type="domain" description="B5" evidence="1">
    <location>
        <begin position="400"/>
        <end position="475"/>
    </location>
</feature>
<feature type="domain" description="FDX-ACB" evidence="1">
    <location>
        <begin position="698"/>
        <end position="791"/>
    </location>
</feature>
<feature type="binding site" evidence="1">
    <location>
        <position position="453"/>
    </location>
    <ligand>
        <name>Mg(2+)</name>
        <dbReference type="ChEBI" id="CHEBI:18420"/>
        <note>shared with alpha subunit</note>
    </ligand>
</feature>
<feature type="binding site" evidence="1">
    <location>
        <position position="459"/>
    </location>
    <ligand>
        <name>Mg(2+)</name>
        <dbReference type="ChEBI" id="CHEBI:18420"/>
        <note>shared with alpha subunit</note>
    </ligand>
</feature>
<feature type="binding site" evidence="1">
    <location>
        <position position="462"/>
    </location>
    <ligand>
        <name>Mg(2+)</name>
        <dbReference type="ChEBI" id="CHEBI:18420"/>
        <note>shared with alpha subunit</note>
    </ligand>
</feature>
<feature type="binding site" evidence="1">
    <location>
        <position position="463"/>
    </location>
    <ligand>
        <name>Mg(2+)</name>
        <dbReference type="ChEBI" id="CHEBI:18420"/>
        <note>shared with alpha subunit</note>
    </ligand>
</feature>
<gene>
    <name evidence="1" type="primary">pheT</name>
    <name type="ordered locus">AZOSEA04590</name>
    <name type="ORF">ebA867</name>
</gene>
<organism>
    <name type="scientific">Aromatoleum aromaticum (strain DSM 19018 / LMG 30748 / EbN1)</name>
    <name type="common">Azoarcus sp. (strain EbN1)</name>
    <dbReference type="NCBI Taxonomy" id="76114"/>
    <lineage>
        <taxon>Bacteria</taxon>
        <taxon>Pseudomonadati</taxon>
        <taxon>Pseudomonadota</taxon>
        <taxon>Betaproteobacteria</taxon>
        <taxon>Rhodocyclales</taxon>
        <taxon>Rhodocyclaceae</taxon>
        <taxon>Aromatoleum</taxon>
    </lineage>
</organism>
<comment type="catalytic activity">
    <reaction evidence="1">
        <text>tRNA(Phe) + L-phenylalanine + ATP = L-phenylalanyl-tRNA(Phe) + AMP + diphosphate + H(+)</text>
        <dbReference type="Rhea" id="RHEA:19413"/>
        <dbReference type="Rhea" id="RHEA-COMP:9668"/>
        <dbReference type="Rhea" id="RHEA-COMP:9699"/>
        <dbReference type="ChEBI" id="CHEBI:15378"/>
        <dbReference type="ChEBI" id="CHEBI:30616"/>
        <dbReference type="ChEBI" id="CHEBI:33019"/>
        <dbReference type="ChEBI" id="CHEBI:58095"/>
        <dbReference type="ChEBI" id="CHEBI:78442"/>
        <dbReference type="ChEBI" id="CHEBI:78531"/>
        <dbReference type="ChEBI" id="CHEBI:456215"/>
        <dbReference type="EC" id="6.1.1.20"/>
    </reaction>
</comment>
<comment type="cofactor">
    <cofactor evidence="1">
        <name>Mg(2+)</name>
        <dbReference type="ChEBI" id="CHEBI:18420"/>
    </cofactor>
    <text evidence="1">Binds 2 magnesium ions per tetramer.</text>
</comment>
<comment type="subunit">
    <text evidence="1">Tetramer of two alpha and two beta subunits.</text>
</comment>
<comment type="subcellular location">
    <subcellularLocation>
        <location evidence="1">Cytoplasm</location>
    </subcellularLocation>
</comment>
<comment type="similarity">
    <text evidence="1">Belongs to the phenylalanyl-tRNA synthetase beta subunit family. Type 1 subfamily.</text>
</comment>
<sequence>MQFSEHWLRSLVNPPLDSESLGHLLTMAGLEVEEAVPAAAAFSGVVVGRIIEAEKHPNADKLKLCKVDVGQDELLQIVCGAPNAAAGLRVPCAMVGAKLPGFDIKAAKLRGVESFGMLCSARELGLSDDHGGLLELPDNAPIGQDIRNFLALDDTLFTIKLTPNRSDCLSLAGVAREVAALTGQPFALPQIEAVVPAIDDRRPVVLDAPDGCPRYCSRIVRGVDAKAPTPDWMKQRLQRSGVRSISALVDVTNYVMLELGQPLHAFDNAKLVGAIHVRYPHAGEKVLLLNEQTVVPAADTLLIADEARALALAGIMGGEDSGITLDTVDVFLESAFFAPAAIAGRARSYGFVSDASHRFERGVDFELPARAIERATRLILDICGGTAGPADETVAKDHLPERPAVRLRPARARRLLGIDLGDDAIVRLLEGVHLSVEREGDALLVTPPSFRFDIEIEEDLIEEVARLHGYDAIPACAPQGSLMMLDRSESGRSAWDVRHLLAARDFQEVVNYAFVEEAWERDFCANAEPIRLANPIASQMSVMRSSLIPGLAANLVANRKRQQARVRVFEIGRCFERKADGEPVAGFQQPLRVAGLAAGLALPEQWGAASRQVDFYDVKSDVEALFAPRALGFERLSDPALHPGRAASILLDGRRIGLLGEIHPVWVQRYEMGTAPVVFEIELDAALLADLPAYREISRQPAVTRDVALVVEQALTAARVIEVMQEAAPTIVMGMELFDIYHGKGIDPGKKSLAFRVLMQDTQRTLEDAEVDAAVEAIVRHTETSLGARLRG</sequence>
<accession>Q5P7Y0</accession>
<evidence type="ECO:0000255" key="1">
    <source>
        <dbReference type="HAMAP-Rule" id="MF_00283"/>
    </source>
</evidence>
<keyword id="KW-0030">Aminoacyl-tRNA synthetase</keyword>
<keyword id="KW-0067">ATP-binding</keyword>
<keyword id="KW-0963">Cytoplasm</keyword>
<keyword id="KW-0436">Ligase</keyword>
<keyword id="KW-0460">Magnesium</keyword>
<keyword id="KW-0479">Metal-binding</keyword>
<keyword id="KW-0547">Nucleotide-binding</keyword>
<keyword id="KW-0648">Protein biosynthesis</keyword>
<keyword id="KW-1185">Reference proteome</keyword>
<keyword id="KW-0694">RNA-binding</keyword>
<keyword id="KW-0820">tRNA-binding</keyword>